<keyword id="KW-0963">Cytoplasm</keyword>
<keyword id="KW-0396">Initiation factor</keyword>
<keyword id="KW-0648">Protein biosynthesis</keyword>
<keyword id="KW-1185">Reference proteome</keyword>
<dbReference type="EMBL" id="AL591688">
    <property type="protein sequence ID" value="CAC41719.1"/>
    <property type="status" value="ALT_INIT"/>
    <property type="molecule type" value="Genomic_DNA"/>
</dbReference>
<dbReference type="RefSeq" id="NP_384388.1">
    <property type="nucleotide sequence ID" value="NC_003047.1"/>
</dbReference>
<dbReference type="SMR" id="Q92ST3"/>
<dbReference type="EnsemblBacteria" id="CAC41719">
    <property type="protein sequence ID" value="CAC41719"/>
    <property type="gene ID" value="SMc00362"/>
</dbReference>
<dbReference type="KEGG" id="sme:SMc00362"/>
<dbReference type="PATRIC" id="fig|266834.11.peg.1651"/>
<dbReference type="eggNOG" id="COG0290">
    <property type="taxonomic scope" value="Bacteria"/>
</dbReference>
<dbReference type="HOGENOM" id="CLU_054919_3_2_5"/>
<dbReference type="OrthoDB" id="9806014at2"/>
<dbReference type="Proteomes" id="UP000001976">
    <property type="component" value="Chromosome"/>
</dbReference>
<dbReference type="GO" id="GO:0005829">
    <property type="term" value="C:cytosol"/>
    <property type="evidence" value="ECO:0007669"/>
    <property type="project" value="TreeGrafter"/>
</dbReference>
<dbReference type="GO" id="GO:0016020">
    <property type="term" value="C:membrane"/>
    <property type="evidence" value="ECO:0007669"/>
    <property type="project" value="TreeGrafter"/>
</dbReference>
<dbReference type="GO" id="GO:0043022">
    <property type="term" value="F:ribosome binding"/>
    <property type="evidence" value="ECO:0007669"/>
    <property type="project" value="TreeGrafter"/>
</dbReference>
<dbReference type="GO" id="GO:0003743">
    <property type="term" value="F:translation initiation factor activity"/>
    <property type="evidence" value="ECO:0007669"/>
    <property type="project" value="UniProtKB-UniRule"/>
</dbReference>
<dbReference type="GO" id="GO:0032790">
    <property type="term" value="P:ribosome disassembly"/>
    <property type="evidence" value="ECO:0007669"/>
    <property type="project" value="TreeGrafter"/>
</dbReference>
<dbReference type="FunFam" id="3.30.110.10:FF:000001">
    <property type="entry name" value="Translation initiation factor IF-3"/>
    <property type="match status" value="1"/>
</dbReference>
<dbReference type="Gene3D" id="3.30.110.10">
    <property type="entry name" value="Translation initiation factor 3 (IF-3), C-terminal domain"/>
    <property type="match status" value="1"/>
</dbReference>
<dbReference type="Gene3D" id="3.10.20.80">
    <property type="entry name" value="Translation initiation factor 3 (IF-3), N-terminal domain"/>
    <property type="match status" value="1"/>
</dbReference>
<dbReference type="HAMAP" id="MF_00080">
    <property type="entry name" value="IF_3"/>
    <property type="match status" value="1"/>
</dbReference>
<dbReference type="InterPro" id="IPR036788">
    <property type="entry name" value="T_IF-3_C_sf"/>
</dbReference>
<dbReference type="InterPro" id="IPR036787">
    <property type="entry name" value="T_IF-3_N_sf"/>
</dbReference>
<dbReference type="InterPro" id="IPR001288">
    <property type="entry name" value="Translation_initiation_fac_3"/>
</dbReference>
<dbReference type="InterPro" id="IPR019815">
    <property type="entry name" value="Translation_initiation_fac_3_C"/>
</dbReference>
<dbReference type="InterPro" id="IPR019814">
    <property type="entry name" value="Translation_initiation_fac_3_N"/>
</dbReference>
<dbReference type="NCBIfam" id="TIGR00168">
    <property type="entry name" value="infC"/>
    <property type="match status" value="1"/>
</dbReference>
<dbReference type="PANTHER" id="PTHR10938">
    <property type="entry name" value="TRANSLATION INITIATION FACTOR IF-3"/>
    <property type="match status" value="1"/>
</dbReference>
<dbReference type="PANTHER" id="PTHR10938:SF0">
    <property type="entry name" value="TRANSLATION INITIATION FACTOR IF-3, MITOCHONDRIAL"/>
    <property type="match status" value="1"/>
</dbReference>
<dbReference type="Pfam" id="PF00707">
    <property type="entry name" value="IF3_C"/>
    <property type="match status" value="1"/>
</dbReference>
<dbReference type="Pfam" id="PF05198">
    <property type="entry name" value="IF3_N"/>
    <property type="match status" value="1"/>
</dbReference>
<dbReference type="SUPFAM" id="SSF55200">
    <property type="entry name" value="Translation initiation factor IF3, C-terminal domain"/>
    <property type="match status" value="1"/>
</dbReference>
<dbReference type="SUPFAM" id="SSF54364">
    <property type="entry name" value="Translation initiation factor IF3, N-terminal domain"/>
    <property type="match status" value="1"/>
</dbReference>
<reference key="1">
    <citation type="journal article" date="2001" name="Proc. Natl. Acad. Sci. U.S.A.">
        <title>Analysis of the chromosome sequence of the legume symbiont Sinorhizobium meliloti strain 1021.</title>
        <authorList>
            <person name="Capela D."/>
            <person name="Barloy-Hubler F."/>
            <person name="Gouzy J."/>
            <person name="Bothe G."/>
            <person name="Ampe F."/>
            <person name="Batut J."/>
            <person name="Boistard P."/>
            <person name="Becker A."/>
            <person name="Boutry M."/>
            <person name="Cadieu E."/>
            <person name="Dreano S."/>
            <person name="Gloux S."/>
            <person name="Godrie T."/>
            <person name="Goffeau A."/>
            <person name="Kahn D."/>
            <person name="Kiss E."/>
            <person name="Lelaure V."/>
            <person name="Masuy D."/>
            <person name="Pohl T."/>
            <person name="Portetelle D."/>
            <person name="Puehler A."/>
            <person name="Purnelle B."/>
            <person name="Ramsperger U."/>
            <person name="Renard C."/>
            <person name="Thebault P."/>
            <person name="Vandenbol M."/>
            <person name="Weidner S."/>
            <person name="Galibert F."/>
        </authorList>
    </citation>
    <scope>NUCLEOTIDE SEQUENCE [LARGE SCALE GENOMIC DNA]</scope>
    <source>
        <strain>1021</strain>
    </source>
</reference>
<reference key="2">
    <citation type="journal article" date="2001" name="Science">
        <title>The composite genome of the legume symbiont Sinorhizobium meliloti.</title>
        <authorList>
            <person name="Galibert F."/>
            <person name="Finan T.M."/>
            <person name="Long S.R."/>
            <person name="Puehler A."/>
            <person name="Abola P."/>
            <person name="Ampe F."/>
            <person name="Barloy-Hubler F."/>
            <person name="Barnett M.J."/>
            <person name="Becker A."/>
            <person name="Boistard P."/>
            <person name="Bothe G."/>
            <person name="Boutry M."/>
            <person name="Bowser L."/>
            <person name="Buhrmester J."/>
            <person name="Cadieu E."/>
            <person name="Capela D."/>
            <person name="Chain P."/>
            <person name="Cowie A."/>
            <person name="Davis R.W."/>
            <person name="Dreano S."/>
            <person name="Federspiel N.A."/>
            <person name="Fisher R.F."/>
            <person name="Gloux S."/>
            <person name="Godrie T."/>
            <person name="Goffeau A."/>
            <person name="Golding B."/>
            <person name="Gouzy J."/>
            <person name="Gurjal M."/>
            <person name="Hernandez-Lucas I."/>
            <person name="Hong A."/>
            <person name="Huizar L."/>
            <person name="Hyman R.W."/>
            <person name="Jones T."/>
            <person name="Kahn D."/>
            <person name="Kahn M.L."/>
            <person name="Kalman S."/>
            <person name="Keating D.H."/>
            <person name="Kiss E."/>
            <person name="Komp C."/>
            <person name="Lelaure V."/>
            <person name="Masuy D."/>
            <person name="Palm C."/>
            <person name="Peck M.C."/>
            <person name="Pohl T.M."/>
            <person name="Portetelle D."/>
            <person name="Purnelle B."/>
            <person name="Ramsperger U."/>
            <person name="Surzycki R."/>
            <person name="Thebault P."/>
            <person name="Vandenbol M."/>
            <person name="Vorhoelter F.J."/>
            <person name="Weidner S."/>
            <person name="Wells D.H."/>
            <person name="Wong K."/>
            <person name="Yeh K.-C."/>
            <person name="Batut J."/>
        </authorList>
    </citation>
    <scope>NUCLEOTIDE SEQUENCE [LARGE SCALE GENOMIC DNA]</scope>
    <source>
        <strain>1021</strain>
    </source>
</reference>
<feature type="chain" id="PRO_0000177564" description="Translation initiation factor IF-3">
    <location>
        <begin position="1"/>
        <end position="177"/>
    </location>
</feature>
<evidence type="ECO:0000255" key="1">
    <source>
        <dbReference type="HAMAP-Rule" id="MF_00080"/>
    </source>
</evidence>
<evidence type="ECO:0000305" key="2"/>
<gene>
    <name evidence="1" type="primary">infC</name>
    <name type="ordered locus">R00282</name>
    <name type="ORF">SMc00362</name>
</gene>
<organism>
    <name type="scientific">Rhizobium meliloti (strain 1021)</name>
    <name type="common">Ensifer meliloti</name>
    <name type="synonym">Sinorhizobium meliloti</name>
    <dbReference type="NCBI Taxonomy" id="266834"/>
    <lineage>
        <taxon>Bacteria</taxon>
        <taxon>Pseudomonadati</taxon>
        <taxon>Pseudomonadota</taxon>
        <taxon>Alphaproteobacteria</taxon>
        <taxon>Hyphomicrobiales</taxon>
        <taxon>Rhizobiaceae</taxon>
        <taxon>Sinorhizobium/Ensifer group</taxon>
        <taxon>Sinorhizobium</taxon>
    </lineage>
</organism>
<proteinExistence type="inferred from homology"/>
<comment type="function">
    <text evidence="1">IF-3 binds to the 30S ribosomal subunit and shifts the equilibrium between 70S ribosomes and their 50S and 30S subunits in favor of the free subunits, thus enhancing the availability of 30S subunits on which protein synthesis initiation begins.</text>
</comment>
<comment type="subunit">
    <text evidence="1">Monomer.</text>
</comment>
<comment type="subcellular location">
    <subcellularLocation>
        <location evidence="1">Cytoplasm</location>
    </subcellularLocation>
</comment>
<comment type="similarity">
    <text evidence="1">Belongs to the IF-3 family.</text>
</comment>
<comment type="sequence caution" evidence="2">
    <conflict type="erroneous initiation">
        <sequence resource="EMBL-CDS" id="CAC41719"/>
    </conflict>
</comment>
<sequence>MRRPFKADAPVKEGPRANKEIRVPRVQLIDAEQNLGSIPIDQALRMADEAGLDLVEIAPNSDPPVCKILDLGKLKYANQKKAAEARKKQKIVEIKEIKMRPNIDTHDYEVKMKAMNRFFEEGDKVKVTLKFRGREMAHQELGMKLLMQVKDDTQEIAKVEAEPKLEGRQMMMVLAPK</sequence>
<accession>Q92ST3</accession>
<name>IF3_RHIME</name>
<protein>
    <recommendedName>
        <fullName evidence="1">Translation initiation factor IF-3</fullName>
    </recommendedName>
</protein>